<dbReference type="EMBL" id="CP000872">
    <property type="protein sequence ID" value="ABX62303.1"/>
    <property type="molecule type" value="Genomic_DNA"/>
</dbReference>
<dbReference type="RefSeq" id="WP_004689765.1">
    <property type="nucleotide sequence ID" value="NC_010103.1"/>
</dbReference>
<dbReference type="SMR" id="A9M5P8"/>
<dbReference type="KEGG" id="bcs:BCAN_A1254"/>
<dbReference type="HOGENOM" id="CLU_037562_3_1_5"/>
<dbReference type="Proteomes" id="UP000001385">
    <property type="component" value="Chromosome I"/>
</dbReference>
<dbReference type="GO" id="GO:1990904">
    <property type="term" value="C:ribonucleoprotein complex"/>
    <property type="evidence" value="ECO:0007669"/>
    <property type="project" value="UniProtKB-KW"/>
</dbReference>
<dbReference type="GO" id="GO:0005840">
    <property type="term" value="C:ribosome"/>
    <property type="evidence" value="ECO:0007669"/>
    <property type="project" value="UniProtKB-KW"/>
</dbReference>
<dbReference type="GO" id="GO:0019843">
    <property type="term" value="F:rRNA binding"/>
    <property type="evidence" value="ECO:0007669"/>
    <property type="project" value="UniProtKB-UniRule"/>
</dbReference>
<dbReference type="GO" id="GO:0003735">
    <property type="term" value="F:structural constituent of ribosome"/>
    <property type="evidence" value="ECO:0007669"/>
    <property type="project" value="InterPro"/>
</dbReference>
<dbReference type="GO" id="GO:0006412">
    <property type="term" value="P:translation"/>
    <property type="evidence" value="ECO:0007669"/>
    <property type="project" value="UniProtKB-UniRule"/>
</dbReference>
<dbReference type="FunFam" id="3.30.70.330:FF:000001">
    <property type="entry name" value="50S ribosomal protein L23"/>
    <property type="match status" value="1"/>
</dbReference>
<dbReference type="Gene3D" id="3.30.70.330">
    <property type="match status" value="1"/>
</dbReference>
<dbReference type="HAMAP" id="MF_01369_B">
    <property type="entry name" value="Ribosomal_uL23_B"/>
    <property type="match status" value="1"/>
</dbReference>
<dbReference type="InterPro" id="IPR012677">
    <property type="entry name" value="Nucleotide-bd_a/b_plait_sf"/>
</dbReference>
<dbReference type="InterPro" id="IPR013025">
    <property type="entry name" value="Ribosomal_uL23-like"/>
</dbReference>
<dbReference type="InterPro" id="IPR012678">
    <property type="entry name" value="Ribosomal_uL23/eL15/eS24_sf"/>
</dbReference>
<dbReference type="NCBIfam" id="NF004359">
    <property type="entry name" value="PRK05738.1-3"/>
    <property type="match status" value="1"/>
</dbReference>
<dbReference type="NCBIfam" id="NF004360">
    <property type="entry name" value="PRK05738.1-5"/>
    <property type="match status" value="1"/>
</dbReference>
<dbReference type="NCBIfam" id="NF004363">
    <property type="entry name" value="PRK05738.2-4"/>
    <property type="match status" value="1"/>
</dbReference>
<dbReference type="PANTHER" id="PTHR11620">
    <property type="entry name" value="60S RIBOSOMAL PROTEIN L23A"/>
    <property type="match status" value="1"/>
</dbReference>
<dbReference type="Pfam" id="PF00276">
    <property type="entry name" value="Ribosomal_L23"/>
    <property type="match status" value="1"/>
</dbReference>
<dbReference type="SUPFAM" id="SSF54189">
    <property type="entry name" value="Ribosomal proteins S24e, L23 and L15e"/>
    <property type="match status" value="1"/>
</dbReference>
<proteinExistence type="inferred from homology"/>
<protein>
    <recommendedName>
        <fullName evidence="1">Large ribosomal subunit protein uL23</fullName>
    </recommendedName>
    <alternativeName>
        <fullName evidence="2">50S ribosomal protein L23</fullName>
    </alternativeName>
</protein>
<sequence>MTDLRHYDVIVSPVITEKSTMVSEHNQVVFNVARKATKPEIKAAVEALFGVKVTAVNTAVRKGKVKRFRGLVGRQSDVKKAIVTLAEGQSIDVSTGL</sequence>
<evidence type="ECO:0000255" key="1">
    <source>
        <dbReference type="HAMAP-Rule" id="MF_01369"/>
    </source>
</evidence>
<evidence type="ECO:0000305" key="2"/>
<comment type="function">
    <text evidence="1">One of the early assembly proteins it binds 23S rRNA. One of the proteins that surrounds the polypeptide exit tunnel on the outside of the ribosome. Forms the main docking site for trigger factor binding to the ribosome.</text>
</comment>
<comment type="subunit">
    <text evidence="1">Part of the 50S ribosomal subunit. Contacts protein L29, and trigger factor when it is bound to the ribosome.</text>
</comment>
<comment type="similarity">
    <text evidence="1">Belongs to the universal ribosomal protein uL23 family.</text>
</comment>
<gene>
    <name evidence="1" type="primary">rplW</name>
    <name type="ordered locus">BCAN_A1254</name>
</gene>
<accession>A9M5P8</accession>
<organism>
    <name type="scientific">Brucella canis (strain ATCC 23365 / NCTC 10854 / RM-666)</name>
    <dbReference type="NCBI Taxonomy" id="483179"/>
    <lineage>
        <taxon>Bacteria</taxon>
        <taxon>Pseudomonadati</taxon>
        <taxon>Pseudomonadota</taxon>
        <taxon>Alphaproteobacteria</taxon>
        <taxon>Hyphomicrobiales</taxon>
        <taxon>Brucellaceae</taxon>
        <taxon>Brucella/Ochrobactrum group</taxon>
        <taxon>Brucella</taxon>
    </lineage>
</organism>
<reference key="1">
    <citation type="submission" date="2007-10" db="EMBL/GenBank/DDBJ databases">
        <title>Brucella canis ATCC 23365 whole genome shotgun sequencing project.</title>
        <authorList>
            <person name="Setubal J.C."/>
            <person name="Bowns C."/>
            <person name="Boyle S."/>
            <person name="Crasta O.R."/>
            <person name="Czar M.J."/>
            <person name="Dharmanolla C."/>
            <person name="Gillespie J.J."/>
            <person name="Kenyon R.W."/>
            <person name="Lu J."/>
            <person name="Mane S."/>
            <person name="Mohapatra S."/>
            <person name="Nagrani S."/>
            <person name="Purkayastha A."/>
            <person name="Rajasimha H.K."/>
            <person name="Shallom J.M."/>
            <person name="Shallom S."/>
            <person name="Shukla M."/>
            <person name="Snyder E.E."/>
            <person name="Sobral B.W."/>
            <person name="Wattam A.R."/>
            <person name="Will R."/>
            <person name="Williams K."/>
            <person name="Yoo H."/>
            <person name="Bruce D."/>
            <person name="Detter C."/>
            <person name="Munk C."/>
            <person name="Brettin T.S."/>
        </authorList>
    </citation>
    <scope>NUCLEOTIDE SEQUENCE [LARGE SCALE GENOMIC DNA]</scope>
    <source>
        <strain>ATCC 23365 / NCTC 10854 / RM-666</strain>
    </source>
</reference>
<feature type="chain" id="PRO_1000087207" description="Large ribosomal subunit protein uL23">
    <location>
        <begin position="1"/>
        <end position="97"/>
    </location>
</feature>
<keyword id="KW-1185">Reference proteome</keyword>
<keyword id="KW-0687">Ribonucleoprotein</keyword>
<keyword id="KW-0689">Ribosomal protein</keyword>
<keyword id="KW-0694">RNA-binding</keyword>
<keyword id="KW-0699">rRNA-binding</keyword>
<name>RL23_BRUC2</name>